<feature type="chain" id="PRO_0000192259" description="Ribosomal protein L11 methyltransferase">
    <location>
        <begin position="1"/>
        <end position="293"/>
    </location>
</feature>
<feature type="binding site" evidence="1">
    <location>
        <position position="145"/>
    </location>
    <ligand>
        <name>S-adenosyl-L-methionine</name>
        <dbReference type="ChEBI" id="CHEBI:59789"/>
    </ligand>
</feature>
<feature type="binding site" evidence="1">
    <location>
        <position position="166"/>
    </location>
    <ligand>
        <name>S-adenosyl-L-methionine</name>
        <dbReference type="ChEBI" id="CHEBI:59789"/>
    </ligand>
</feature>
<feature type="binding site" evidence="1">
    <location>
        <position position="188"/>
    </location>
    <ligand>
        <name>S-adenosyl-L-methionine</name>
        <dbReference type="ChEBI" id="CHEBI:59789"/>
    </ligand>
</feature>
<feature type="binding site" evidence="1">
    <location>
        <position position="230"/>
    </location>
    <ligand>
        <name>S-adenosyl-L-methionine</name>
        <dbReference type="ChEBI" id="CHEBI:59789"/>
    </ligand>
</feature>
<keyword id="KW-0963">Cytoplasm</keyword>
<keyword id="KW-0489">Methyltransferase</keyword>
<keyword id="KW-1185">Reference proteome</keyword>
<keyword id="KW-0949">S-adenosyl-L-methionine</keyword>
<keyword id="KW-0808">Transferase</keyword>
<name>PRMA_ECO57</name>
<sequence>MPWIQLKLNTTGANAEDLSDALMEAGAVSITFQDTHDTPVFEPLPGETRLWGDTDVIGLFDAETDMNDVVAILENHPLLGAGFAHKIEQLEDKDWEREWMDNFHPMRFGERLWICPSWRDVPDENAVNVMLDPGLAFGTGTHPTTSLCLQWLDSLDLTGKTVIDFGCGSGILAIAALKLGAAKAIGIDIDPQAIQASRDNAERNGVSDRLELYLPKDQPEEMKADVVVANILAGPLRELAPLISVLPVSGGLLGLSGILASQAESVCEAYADSFALDPVVEKEEWCRITGRKN</sequence>
<gene>
    <name evidence="1" type="primary">prmA</name>
    <name type="ordered locus">Z4619</name>
    <name type="ordered locus">ECs4131</name>
</gene>
<evidence type="ECO:0000255" key="1">
    <source>
        <dbReference type="HAMAP-Rule" id="MF_00735"/>
    </source>
</evidence>
<evidence type="ECO:0000305" key="2"/>
<proteinExistence type="inferred from homology"/>
<protein>
    <recommendedName>
        <fullName evidence="1">Ribosomal protein L11 methyltransferase</fullName>
        <shortName evidence="1">L11 Mtase</shortName>
        <ecNumber evidence="1">2.1.1.-</ecNumber>
    </recommendedName>
</protein>
<comment type="function">
    <text evidence="1">Methylates ribosomal protein L11.</text>
</comment>
<comment type="catalytic activity">
    <reaction evidence="1">
        <text>L-lysyl-[protein] + 3 S-adenosyl-L-methionine = N(6),N(6),N(6)-trimethyl-L-lysyl-[protein] + 3 S-adenosyl-L-homocysteine + 3 H(+)</text>
        <dbReference type="Rhea" id="RHEA:54192"/>
        <dbReference type="Rhea" id="RHEA-COMP:9752"/>
        <dbReference type="Rhea" id="RHEA-COMP:13826"/>
        <dbReference type="ChEBI" id="CHEBI:15378"/>
        <dbReference type="ChEBI" id="CHEBI:29969"/>
        <dbReference type="ChEBI" id="CHEBI:57856"/>
        <dbReference type="ChEBI" id="CHEBI:59789"/>
        <dbReference type="ChEBI" id="CHEBI:61961"/>
    </reaction>
</comment>
<comment type="subcellular location">
    <subcellularLocation>
        <location evidence="1">Cytoplasm</location>
    </subcellularLocation>
</comment>
<comment type="similarity">
    <text evidence="1 2">Belongs to the methyltransferase superfamily. PrmA family.</text>
</comment>
<reference key="1">
    <citation type="journal article" date="2001" name="Nature">
        <title>Genome sequence of enterohaemorrhagic Escherichia coli O157:H7.</title>
        <authorList>
            <person name="Perna N.T."/>
            <person name="Plunkett G. III"/>
            <person name="Burland V."/>
            <person name="Mau B."/>
            <person name="Glasner J.D."/>
            <person name="Rose D.J."/>
            <person name="Mayhew G.F."/>
            <person name="Evans P.S."/>
            <person name="Gregor J."/>
            <person name="Kirkpatrick H.A."/>
            <person name="Posfai G."/>
            <person name="Hackett J."/>
            <person name="Klink S."/>
            <person name="Boutin A."/>
            <person name="Shao Y."/>
            <person name="Miller L."/>
            <person name="Grotbeck E.J."/>
            <person name="Davis N.W."/>
            <person name="Lim A."/>
            <person name="Dimalanta E.T."/>
            <person name="Potamousis K."/>
            <person name="Apodaca J."/>
            <person name="Anantharaman T.S."/>
            <person name="Lin J."/>
            <person name="Yen G."/>
            <person name="Schwartz D.C."/>
            <person name="Welch R.A."/>
            <person name="Blattner F.R."/>
        </authorList>
    </citation>
    <scope>NUCLEOTIDE SEQUENCE [LARGE SCALE GENOMIC DNA]</scope>
    <source>
        <strain>O157:H7 / EDL933 / ATCC 700927 / EHEC</strain>
    </source>
</reference>
<reference key="2">
    <citation type="journal article" date="2001" name="DNA Res.">
        <title>Complete genome sequence of enterohemorrhagic Escherichia coli O157:H7 and genomic comparison with a laboratory strain K-12.</title>
        <authorList>
            <person name="Hayashi T."/>
            <person name="Makino K."/>
            <person name="Ohnishi M."/>
            <person name="Kurokawa K."/>
            <person name="Ishii K."/>
            <person name="Yokoyama K."/>
            <person name="Han C.-G."/>
            <person name="Ohtsubo E."/>
            <person name="Nakayama K."/>
            <person name="Murata T."/>
            <person name="Tanaka M."/>
            <person name="Tobe T."/>
            <person name="Iida T."/>
            <person name="Takami H."/>
            <person name="Honda T."/>
            <person name="Sasakawa C."/>
            <person name="Ogasawara N."/>
            <person name="Yasunaga T."/>
            <person name="Kuhara S."/>
            <person name="Shiba T."/>
            <person name="Hattori M."/>
            <person name="Shinagawa H."/>
        </authorList>
    </citation>
    <scope>NUCLEOTIDE SEQUENCE [LARGE SCALE GENOMIC DNA]</scope>
    <source>
        <strain>O157:H7 / Sakai / RIMD 0509952 / EHEC</strain>
    </source>
</reference>
<organism>
    <name type="scientific">Escherichia coli O157:H7</name>
    <dbReference type="NCBI Taxonomy" id="83334"/>
    <lineage>
        <taxon>Bacteria</taxon>
        <taxon>Pseudomonadati</taxon>
        <taxon>Pseudomonadota</taxon>
        <taxon>Gammaproteobacteria</taxon>
        <taxon>Enterobacterales</taxon>
        <taxon>Enterobacteriaceae</taxon>
        <taxon>Escherichia</taxon>
    </lineage>
</organism>
<accession>P0A8T3</accession>
<accession>P28637</accession>
<accession>P76680</accession>
<accession>P76681</accession>
<dbReference type="EC" id="2.1.1.-" evidence="1"/>
<dbReference type="EMBL" id="AE005174">
    <property type="protein sequence ID" value="AAG58387.1"/>
    <property type="molecule type" value="Genomic_DNA"/>
</dbReference>
<dbReference type="EMBL" id="BA000007">
    <property type="protein sequence ID" value="BAB37554.1"/>
    <property type="molecule type" value="Genomic_DNA"/>
</dbReference>
<dbReference type="PIR" id="C91145">
    <property type="entry name" value="C91145"/>
</dbReference>
<dbReference type="RefSeq" id="NP_312158.1">
    <property type="nucleotide sequence ID" value="NC_002695.1"/>
</dbReference>
<dbReference type="RefSeq" id="WP_001145827.1">
    <property type="nucleotide sequence ID" value="NZ_VOAI01000014.1"/>
</dbReference>
<dbReference type="SMR" id="P0A8T3"/>
<dbReference type="STRING" id="155864.Z4619"/>
<dbReference type="GeneID" id="75206107"/>
<dbReference type="GeneID" id="916021"/>
<dbReference type="KEGG" id="ece:Z4619"/>
<dbReference type="KEGG" id="ecs:ECs_4131"/>
<dbReference type="PATRIC" id="fig|386585.9.peg.4314"/>
<dbReference type="eggNOG" id="COG2264">
    <property type="taxonomic scope" value="Bacteria"/>
</dbReference>
<dbReference type="HOGENOM" id="CLU_049382_4_1_6"/>
<dbReference type="OMA" id="MYYEFFF"/>
<dbReference type="Proteomes" id="UP000000558">
    <property type="component" value="Chromosome"/>
</dbReference>
<dbReference type="Proteomes" id="UP000002519">
    <property type="component" value="Chromosome"/>
</dbReference>
<dbReference type="GO" id="GO:0005829">
    <property type="term" value="C:cytosol"/>
    <property type="evidence" value="ECO:0007669"/>
    <property type="project" value="TreeGrafter"/>
</dbReference>
<dbReference type="GO" id="GO:0016279">
    <property type="term" value="F:protein-lysine N-methyltransferase activity"/>
    <property type="evidence" value="ECO:0007669"/>
    <property type="project" value="TreeGrafter"/>
</dbReference>
<dbReference type="GO" id="GO:0032259">
    <property type="term" value="P:methylation"/>
    <property type="evidence" value="ECO:0007669"/>
    <property type="project" value="UniProtKB-KW"/>
</dbReference>
<dbReference type="CDD" id="cd02440">
    <property type="entry name" value="AdoMet_MTases"/>
    <property type="match status" value="1"/>
</dbReference>
<dbReference type="FunFam" id="3.40.50.150:FF:000021">
    <property type="entry name" value="Ribosomal protein L11 methyltransferase"/>
    <property type="match status" value="1"/>
</dbReference>
<dbReference type="Gene3D" id="3.40.50.150">
    <property type="entry name" value="Vaccinia Virus protein VP39"/>
    <property type="match status" value="1"/>
</dbReference>
<dbReference type="HAMAP" id="MF_00735">
    <property type="entry name" value="Methyltr_PrmA"/>
    <property type="match status" value="1"/>
</dbReference>
<dbReference type="InterPro" id="IPR050078">
    <property type="entry name" value="Ribosomal_L11_MeTrfase_PrmA"/>
</dbReference>
<dbReference type="InterPro" id="IPR004498">
    <property type="entry name" value="Ribosomal_PrmA_MeTrfase"/>
</dbReference>
<dbReference type="InterPro" id="IPR029063">
    <property type="entry name" value="SAM-dependent_MTases_sf"/>
</dbReference>
<dbReference type="NCBIfam" id="TIGR00406">
    <property type="entry name" value="prmA"/>
    <property type="match status" value="1"/>
</dbReference>
<dbReference type="PANTHER" id="PTHR43648">
    <property type="entry name" value="ELECTRON TRANSFER FLAVOPROTEIN BETA SUBUNIT LYSINE METHYLTRANSFERASE"/>
    <property type="match status" value="1"/>
</dbReference>
<dbReference type="PANTHER" id="PTHR43648:SF1">
    <property type="entry name" value="ELECTRON TRANSFER FLAVOPROTEIN BETA SUBUNIT LYSINE METHYLTRANSFERASE"/>
    <property type="match status" value="1"/>
</dbReference>
<dbReference type="Pfam" id="PF06325">
    <property type="entry name" value="PrmA"/>
    <property type="match status" value="1"/>
</dbReference>
<dbReference type="PIRSF" id="PIRSF000401">
    <property type="entry name" value="RPL11_MTase"/>
    <property type="match status" value="1"/>
</dbReference>
<dbReference type="SUPFAM" id="SSF53335">
    <property type="entry name" value="S-adenosyl-L-methionine-dependent methyltransferases"/>
    <property type="match status" value="1"/>
</dbReference>